<keyword id="KW-0131">Cell cycle</keyword>
<keyword id="KW-0132">Cell division</keyword>
<keyword id="KW-0195">Cyclin</keyword>
<keyword id="KW-1185">Reference proteome</keyword>
<feature type="chain" id="PRO_0000287070" description="Cyclin-U2-2">
    <location>
        <begin position="1"/>
        <end position="230"/>
    </location>
</feature>
<evidence type="ECO:0000269" key="1">
    <source>
    </source>
</evidence>
<evidence type="ECO:0000305" key="2"/>
<sequence length="230" mass="26462">MAVSNSLTISPRKLRSDLYSYSYQNNSKTPLVISVLSSLIDRTLTRNERISRRALPSSGAGGKTQIFDCREIPDMTIQSYLGRIFRYTKAGPSVYVVAYVYIDRFCQTNPGFRISLTNVHRLLITTIMIASKYVEDLNYRNSYFAKVGGLETEDLNKLELEFLFLMGFKLHVNVSVFESYCCHLEREVSFGGGYQIEKALRCAEEIKSRQMIIQDPKHHHHHHQLARILL</sequence>
<reference key="1">
    <citation type="journal article" date="2000" name="Nature">
        <title>Sequence and analysis of chromosome 3 of the plant Arabidopsis thaliana.</title>
        <authorList>
            <person name="Salanoubat M."/>
            <person name="Lemcke K."/>
            <person name="Rieger M."/>
            <person name="Ansorge W."/>
            <person name="Unseld M."/>
            <person name="Fartmann B."/>
            <person name="Valle G."/>
            <person name="Bloecker H."/>
            <person name="Perez-Alonso M."/>
            <person name="Obermaier B."/>
            <person name="Delseny M."/>
            <person name="Boutry M."/>
            <person name="Grivell L.A."/>
            <person name="Mache R."/>
            <person name="Puigdomenech P."/>
            <person name="De Simone V."/>
            <person name="Choisne N."/>
            <person name="Artiguenave F."/>
            <person name="Robert C."/>
            <person name="Brottier P."/>
            <person name="Wincker P."/>
            <person name="Cattolico L."/>
            <person name="Weissenbach J."/>
            <person name="Saurin W."/>
            <person name="Quetier F."/>
            <person name="Schaefer M."/>
            <person name="Mueller-Auer S."/>
            <person name="Gabel C."/>
            <person name="Fuchs M."/>
            <person name="Benes V."/>
            <person name="Wurmbach E."/>
            <person name="Drzonek H."/>
            <person name="Erfle H."/>
            <person name="Jordan N."/>
            <person name="Bangert S."/>
            <person name="Wiedelmann R."/>
            <person name="Kranz H."/>
            <person name="Voss H."/>
            <person name="Holland R."/>
            <person name="Brandt P."/>
            <person name="Nyakatura G."/>
            <person name="Vezzi A."/>
            <person name="D'Angelo M."/>
            <person name="Pallavicini A."/>
            <person name="Toppo S."/>
            <person name="Simionati B."/>
            <person name="Conrad A."/>
            <person name="Hornischer K."/>
            <person name="Kauer G."/>
            <person name="Loehnert T.-H."/>
            <person name="Nordsiek G."/>
            <person name="Reichelt J."/>
            <person name="Scharfe M."/>
            <person name="Schoen O."/>
            <person name="Bargues M."/>
            <person name="Terol J."/>
            <person name="Climent J."/>
            <person name="Navarro P."/>
            <person name="Collado C."/>
            <person name="Perez-Perez A."/>
            <person name="Ottenwaelder B."/>
            <person name="Duchemin D."/>
            <person name="Cooke R."/>
            <person name="Laudie M."/>
            <person name="Berger-Llauro C."/>
            <person name="Purnelle B."/>
            <person name="Masuy D."/>
            <person name="de Haan M."/>
            <person name="Maarse A.C."/>
            <person name="Alcaraz J.-P."/>
            <person name="Cottet A."/>
            <person name="Casacuberta E."/>
            <person name="Monfort A."/>
            <person name="Argiriou A."/>
            <person name="Flores M."/>
            <person name="Liguori R."/>
            <person name="Vitale D."/>
            <person name="Mannhaupt G."/>
            <person name="Haase D."/>
            <person name="Schoof H."/>
            <person name="Rudd S."/>
            <person name="Zaccaria P."/>
            <person name="Mewes H.-W."/>
            <person name="Mayer K.F.X."/>
            <person name="Kaul S."/>
            <person name="Town C.D."/>
            <person name="Koo H.L."/>
            <person name="Tallon L.J."/>
            <person name="Jenkins J."/>
            <person name="Rooney T."/>
            <person name="Rizzo M."/>
            <person name="Walts A."/>
            <person name="Utterback T."/>
            <person name="Fujii C.Y."/>
            <person name="Shea T.P."/>
            <person name="Creasy T.H."/>
            <person name="Haas B."/>
            <person name="Maiti R."/>
            <person name="Wu D."/>
            <person name="Peterson J."/>
            <person name="Van Aken S."/>
            <person name="Pai G."/>
            <person name="Militscher J."/>
            <person name="Sellers P."/>
            <person name="Gill J.E."/>
            <person name="Feldblyum T.V."/>
            <person name="Preuss D."/>
            <person name="Lin X."/>
            <person name="Nierman W.C."/>
            <person name="Salzberg S.L."/>
            <person name="White O."/>
            <person name="Venter J.C."/>
            <person name="Fraser C.M."/>
            <person name="Kaneko T."/>
            <person name="Nakamura Y."/>
            <person name="Sato S."/>
            <person name="Kato T."/>
            <person name="Asamizu E."/>
            <person name="Sasamoto S."/>
            <person name="Kimura T."/>
            <person name="Idesawa K."/>
            <person name="Kawashima K."/>
            <person name="Kishida Y."/>
            <person name="Kiyokawa C."/>
            <person name="Kohara M."/>
            <person name="Matsumoto M."/>
            <person name="Matsuno A."/>
            <person name="Muraki A."/>
            <person name="Nakayama S."/>
            <person name="Nakazaki N."/>
            <person name="Shinpo S."/>
            <person name="Takeuchi C."/>
            <person name="Wada T."/>
            <person name="Watanabe A."/>
            <person name="Yamada M."/>
            <person name="Yasuda M."/>
            <person name="Tabata S."/>
        </authorList>
    </citation>
    <scope>NUCLEOTIDE SEQUENCE [LARGE SCALE GENOMIC DNA]</scope>
    <source>
        <strain>cv. Columbia</strain>
    </source>
</reference>
<reference key="2">
    <citation type="journal article" date="2017" name="Plant J.">
        <title>Araport11: a complete reannotation of the Arabidopsis thaliana reference genome.</title>
        <authorList>
            <person name="Cheng C.Y."/>
            <person name="Krishnakumar V."/>
            <person name="Chan A.P."/>
            <person name="Thibaud-Nissen F."/>
            <person name="Schobel S."/>
            <person name="Town C.D."/>
        </authorList>
    </citation>
    <scope>GENOME REANNOTATION</scope>
    <source>
        <strain>cv. Columbia</strain>
    </source>
</reference>
<reference key="3">
    <citation type="submission" date="2004-03" db="EMBL/GenBank/DDBJ databases">
        <authorList>
            <person name="Shinn P."/>
            <person name="Chen H."/>
            <person name="Cheuk R.F."/>
            <person name="Kim C.J."/>
            <person name="Ecker J.R."/>
        </authorList>
    </citation>
    <scope>NUCLEOTIDE SEQUENCE [LARGE SCALE MRNA]</scope>
    <source>
        <strain>cv. Columbia</strain>
    </source>
</reference>
<reference key="4">
    <citation type="journal article" date="2004" name="Cell. Mol. Life Sci.">
        <title>Molecular characterization of Arabidopsis PHO80-like proteins, a novel class of CDKA;1-interacting cyclins.</title>
        <authorList>
            <person name="Torres Acosta J.A."/>
            <person name="de Almeida Engler J."/>
            <person name="Raes J."/>
            <person name="Magyar Z."/>
            <person name="de Groodt R."/>
            <person name="Inze D."/>
            <person name="de Veylder L."/>
        </authorList>
    </citation>
    <scope>TISSUE SPECIFICITY</scope>
    <scope>INTERACTION WITH CDKA-1</scope>
</reference>
<reference key="5">
    <citation type="journal article" date="2004" name="Plant Physiol.">
        <title>Genome-wide analysis of the cyclin family in Arabidopsis and comparative phylogenetic analysis of plant cyclin-like proteins.</title>
        <authorList>
            <person name="Wang G."/>
            <person name="Kong H."/>
            <person name="Sun Y."/>
            <person name="Zhang X."/>
            <person name="Zhang W."/>
            <person name="Altman N."/>
            <person name="dePamphilis C.W."/>
            <person name="Ma H."/>
        </authorList>
    </citation>
    <scope>GENE FAMILY</scope>
    <scope>NOMENCLATURE</scope>
</reference>
<name>CCU22_ARATH</name>
<dbReference type="EMBL" id="AL138646">
    <property type="protein sequence ID" value="CAB81841.1"/>
    <property type="molecule type" value="Genomic_DNA"/>
</dbReference>
<dbReference type="EMBL" id="CP002686">
    <property type="protein sequence ID" value="AEE80078.1"/>
    <property type="molecule type" value="Genomic_DNA"/>
</dbReference>
<dbReference type="EMBL" id="BT012357">
    <property type="protein sequence ID" value="AAS77482.1"/>
    <property type="molecule type" value="mRNA"/>
</dbReference>
<dbReference type="PIR" id="T47866">
    <property type="entry name" value="T47866"/>
</dbReference>
<dbReference type="SMR" id="Q9M205"/>
<dbReference type="BioGRID" id="10540">
    <property type="interactions" value="1"/>
</dbReference>
<dbReference type="FunCoup" id="Q9M205">
    <property type="interactions" value="203"/>
</dbReference>
<dbReference type="IntAct" id="Q9M205">
    <property type="interactions" value="1"/>
</dbReference>
<dbReference type="STRING" id="3702.Q9M205"/>
<dbReference type="PaxDb" id="3702-AT3G60550.1"/>
<dbReference type="ProteomicsDB" id="220519"/>
<dbReference type="EnsemblPlants" id="AT3G60550.1">
    <property type="protein sequence ID" value="AT3G60550.1"/>
    <property type="gene ID" value="AT3G60550"/>
</dbReference>
<dbReference type="Gramene" id="AT3G60550.1">
    <property type="protein sequence ID" value="AT3G60550.1"/>
    <property type="gene ID" value="AT3G60550"/>
</dbReference>
<dbReference type="KEGG" id="ath:AT3G60550"/>
<dbReference type="Araport" id="AT3G60550"/>
<dbReference type="TAIR" id="AT3G60550">
    <property type="gene designation" value="CYCP3"/>
</dbReference>
<dbReference type="eggNOG" id="KOG1674">
    <property type="taxonomic scope" value="Eukaryota"/>
</dbReference>
<dbReference type="HOGENOM" id="CLU_057371_0_1_1"/>
<dbReference type="InParanoid" id="Q9M205"/>
<dbReference type="OMA" id="LAQFHPQ"/>
<dbReference type="PhylomeDB" id="Q9M205"/>
<dbReference type="PRO" id="PR:Q9M205"/>
<dbReference type="Proteomes" id="UP000006548">
    <property type="component" value="Chromosome 3"/>
</dbReference>
<dbReference type="ExpressionAtlas" id="Q9M205">
    <property type="expression patterns" value="baseline and differential"/>
</dbReference>
<dbReference type="GO" id="GO:0019901">
    <property type="term" value="F:protein kinase binding"/>
    <property type="evidence" value="ECO:0007669"/>
    <property type="project" value="InterPro"/>
</dbReference>
<dbReference type="GO" id="GO:0051301">
    <property type="term" value="P:cell division"/>
    <property type="evidence" value="ECO:0007669"/>
    <property type="project" value="UniProtKB-KW"/>
</dbReference>
<dbReference type="CDD" id="cd20604">
    <property type="entry name" value="CYCLIN_AtCycU-like"/>
    <property type="match status" value="1"/>
</dbReference>
<dbReference type="Gene3D" id="1.10.472.10">
    <property type="entry name" value="Cyclin-like"/>
    <property type="match status" value="1"/>
</dbReference>
<dbReference type="InterPro" id="IPR036915">
    <property type="entry name" value="Cyclin-like_sf"/>
</dbReference>
<dbReference type="InterPro" id="IPR012389">
    <property type="entry name" value="Cyclin_P/U"/>
</dbReference>
<dbReference type="InterPro" id="IPR013922">
    <property type="entry name" value="Cyclin_PHO80-like"/>
</dbReference>
<dbReference type="PANTHER" id="PTHR15615">
    <property type="match status" value="1"/>
</dbReference>
<dbReference type="PANTHER" id="PTHR15615:SF85">
    <property type="entry name" value="CYCLIN-U2-2"/>
    <property type="match status" value="1"/>
</dbReference>
<dbReference type="Pfam" id="PF08613">
    <property type="entry name" value="Cyclin"/>
    <property type="match status" value="1"/>
</dbReference>
<dbReference type="PIRSF" id="PIRSF027110">
    <property type="entry name" value="PREG"/>
    <property type="match status" value="1"/>
</dbReference>
<dbReference type="SUPFAM" id="SSF47954">
    <property type="entry name" value="Cyclin-like"/>
    <property type="match status" value="1"/>
</dbReference>
<accession>Q9M205</accession>
<organism>
    <name type="scientific">Arabidopsis thaliana</name>
    <name type="common">Mouse-ear cress</name>
    <dbReference type="NCBI Taxonomy" id="3702"/>
    <lineage>
        <taxon>Eukaryota</taxon>
        <taxon>Viridiplantae</taxon>
        <taxon>Streptophyta</taxon>
        <taxon>Embryophyta</taxon>
        <taxon>Tracheophyta</taxon>
        <taxon>Spermatophyta</taxon>
        <taxon>Magnoliopsida</taxon>
        <taxon>eudicotyledons</taxon>
        <taxon>Gunneridae</taxon>
        <taxon>Pentapetalae</taxon>
        <taxon>rosids</taxon>
        <taxon>malvids</taxon>
        <taxon>Brassicales</taxon>
        <taxon>Brassicaceae</taxon>
        <taxon>Camelineae</taxon>
        <taxon>Arabidopsis</taxon>
    </lineage>
</organism>
<protein>
    <recommendedName>
        <fullName>Cyclin-U2-2</fullName>
        <shortName>CycU2;2</shortName>
    </recommendedName>
    <alternativeName>
        <fullName>Cyclin-P3.2</fullName>
        <shortName>CycP3;2</shortName>
    </alternativeName>
</protein>
<proteinExistence type="evidence at protein level"/>
<gene>
    <name type="primary">CYCU2-2</name>
    <name type="ordered locus">At3g60550</name>
    <name type="ORF">T8B10.210</name>
</gene>
<comment type="subunit">
    <text evidence="1">Interacts with CDKA-1.</text>
</comment>
<comment type="tissue specificity">
    <text evidence="1">Expressed in roots and stems. Expressed in the shoot apex, leaf primordia and young leaves.</text>
</comment>
<comment type="similarity">
    <text evidence="2">Belongs to the cyclin family. Cyclin U/P subfamily.</text>
</comment>